<sequence>MCGDCVEKEYPNRGNTCLENGSFLLNFTGCAVCSKRDFMLITNKSLKEEDGEEIVTYDHLCKNCHHVIARHEYTFSIMDEFQEYTMLCLLCGKAEDTISILPDDPRQMTLLF</sequence>
<dbReference type="EMBL" id="AF060510">
    <property type="protein sequence ID" value="AAG43128.1"/>
    <property type="status" value="ALT_FRAME"/>
    <property type="molecule type" value="mRNA"/>
</dbReference>
<dbReference type="EMBL" id="AK057626">
    <property type="protein sequence ID" value="BAG51943.1"/>
    <property type="molecule type" value="mRNA"/>
</dbReference>
<dbReference type="EMBL" id="AL135745">
    <property type="status" value="NOT_ANNOTATED_CDS"/>
    <property type="molecule type" value="Genomic_DNA"/>
</dbReference>
<dbReference type="EMBL" id="AL139022">
    <property type="status" value="NOT_ANNOTATED_CDS"/>
    <property type="molecule type" value="Genomic_DNA"/>
</dbReference>
<dbReference type="EMBL" id="KF455908">
    <property type="status" value="NOT_ANNOTATED_CDS"/>
    <property type="molecule type" value="Genomic_DNA"/>
</dbReference>
<dbReference type="EMBL" id="CH471061">
    <property type="protein sequence ID" value="EAW80884.1"/>
    <property type="molecule type" value="Genomic_DNA"/>
</dbReference>
<dbReference type="EMBL" id="CH471061">
    <property type="protein sequence ID" value="EAW80887.1"/>
    <property type="molecule type" value="Genomic_DNA"/>
</dbReference>
<dbReference type="EMBL" id="BC020550">
    <property type="protein sequence ID" value="AAH20550.1"/>
    <property type="molecule type" value="mRNA"/>
</dbReference>
<dbReference type="CCDS" id="CCDS32101.3">
    <molecule id="Q8WUH1-2"/>
</dbReference>
<dbReference type="CCDS" id="CCDS55921.2">
    <molecule id="Q8WUH1-4"/>
</dbReference>
<dbReference type="CCDS" id="CCDS55922.2">
    <molecule id="Q8WUH1-3"/>
</dbReference>
<dbReference type="RefSeq" id="NP_001190992.1">
    <property type="nucleotide sequence ID" value="NM_001204063.1"/>
</dbReference>
<dbReference type="RefSeq" id="NP_001190993.2">
    <molecule id="Q8WUH1-3"/>
    <property type="nucleotide sequence ID" value="NM_001204064.2"/>
</dbReference>
<dbReference type="RefSeq" id="NP_001373857.1">
    <molecule id="Q8WUH1-4"/>
    <property type="nucleotide sequence ID" value="NM_001386928.1"/>
</dbReference>
<dbReference type="RefSeq" id="NP_660148.4">
    <molecule id="Q8WUH1-2"/>
    <property type="nucleotide sequence ID" value="NM_145165.4"/>
</dbReference>
<dbReference type="PDB" id="2JOX">
    <property type="method" value="NMR"/>
    <property type="chains" value="A=2-107"/>
</dbReference>
<dbReference type="PDBsum" id="2JOX"/>
<dbReference type="BMRB" id="Q8WUH1"/>
<dbReference type="SMR" id="Q8WUH1"/>
<dbReference type="BioGRID" id="124853">
    <property type="interactions" value="20"/>
</dbReference>
<dbReference type="FunCoup" id="Q8WUH1">
    <property type="interactions" value="275"/>
</dbReference>
<dbReference type="IntAct" id="Q8WUH1">
    <property type="interactions" value="14"/>
</dbReference>
<dbReference type="MINT" id="Q8WUH1"/>
<dbReference type="STRING" id="9606.ENSP00000475473"/>
<dbReference type="GlyGen" id="Q8WUH1">
    <property type="glycosylation" value="1 site, 1 O-linked glycan (1 site)"/>
</dbReference>
<dbReference type="iPTMnet" id="Q8WUH1"/>
<dbReference type="PhosphoSitePlus" id="Q8WUH1"/>
<dbReference type="SwissPalm" id="Q8WUH1"/>
<dbReference type="BioMuta" id="CHURC1"/>
<dbReference type="DMDM" id="510120833"/>
<dbReference type="jPOST" id="Q8WUH1"/>
<dbReference type="MassIVE" id="Q8WUH1"/>
<dbReference type="PaxDb" id="9606-ENSP00000475473"/>
<dbReference type="PeptideAtlas" id="Q8WUH1"/>
<dbReference type="ProteomicsDB" id="32466"/>
<dbReference type="ProteomicsDB" id="32497"/>
<dbReference type="Pumba" id="Q8WUH1"/>
<dbReference type="Antibodypedia" id="51632">
    <property type="antibodies" value="61 antibodies from 18 providers"/>
</dbReference>
<dbReference type="DNASU" id="91612"/>
<dbReference type="Ensembl" id="ENST00000548752.7">
    <molecule id="Q8WUH1-3"/>
    <property type="protein sequence ID" value="ENSP00000450165.3"/>
    <property type="gene ID" value="ENSG00000258289.10"/>
</dbReference>
<dbReference type="Ensembl" id="ENST00000549115.7">
    <molecule id="Q8WUH1-4"/>
    <property type="protein sequence ID" value="ENSP00000448050.2"/>
    <property type="gene ID" value="ENSG00000258289.10"/>
</dbReference>
<dbReference type="Ensembl" id="ENST00000552002.7">
    <molecule id="Q8WUH1-4"/>
    <property type="protein sequence ID" value="ENSP00000450144.2"/>
    <property type="gene ID" value="ENSG00000258289.10"/>
</dbReference>
<dbReference type="Ensembl" id="ENST00000607599.6">
    <molecule id="Q8WUH1-2"/>
    <property type="protein sequence ID" value="ENSP00000475473.2"/>
    <property type="gene ID" value="ENSG00000258289.10"/>
</dbReference>
<dbReference type="GeneID" id="91612"/>
<dbReference type="KEGG" id="hsa:91612"/>
<dbReference type="MANE-Select" id="ENST00000549115.7">
    <property type="protein sequence ID" value="ENSP00000448050.2"/>
    <property type="RefSeq nucleotide sequence ID" value="NM_001386928.1"/>
    <property type="RefSeq protein sequence ID" value="NP_001373857.1"/>
</dbReference>
<dbReference type="UCSC" id="uc001xhv.4">
    <molecule id="Q8WUH1-4"/>
    <property type="organism name" value="human"/>
</dbReference>
<dbReference type="AGR" id="HGNC:20099"/>
<dbReference type="CTD" id="91612"/>
<dbReference type="DisGeNET" id="91612"/>
<dbReference type="GeneCards" id="CHURC1"/>
<dbReference type="HGNC" id="HGNC:20099">
    <property type="gene designation" value="CHURC1"/>
</dbReference>
<dbReference type="HPA" id="ENSG00000258289">
    <property type="expression patterns" value="Low tissue specificity"/>
</dbReference>
<dbReference type="MIM" id="608577">
    <property type="type" value="gene"/>
</dbReference>
<dbReference type="neXtProt" id="NX_Q8WUH1"/>
<dbReference type="OpenTargets" id="ENSG00000258289"/>
<dbReference type="PharmGKB" id="PA134982480"/>
<dbReference type="VEuPathDB" id="HostDB:ENSG00000258289"/>
<dbReference type="eggNOG" id="ENOG502S4AE">
    <property type="taxonomic scope" value="Eukaryota"/>
</dbReference>
<dbReference type="GeneTree" id="ENSGT00390000011163"/>
<dbReference type="HOGENOM" id="CLU_142022_0_0_1"/>
<dbReference type="InParanoid" id="Q8WUH1"/>
<dbReference type="OrthoDB" id="5954706at2759"/>
<dbReference type="PAN-GO" id="Q8WUH1">
    <property type="GO annotations" value="1 GO annotation based on evolutionary models"/>
</dbReference>
<dbReference type="TreeFam" id="TF333004"/>
<dbReference type="PathwayCommons" id="Q8WUH1"/>
<dbReference type="SignaLink" id="Q8WUH1"/>
<dbReference type="BioGRID-ORCS" id="91612">
    <property type="hits" value="18 hits in 1126 CRISPR screens"/>
</dbReference>
<dbReference type="EvolutionaryTrace" id="Q8WUH1"/>
<dbReference type="GenomeRNAi" id="91612"/>
<dbReference type="Pharos" id="Q8WUH1">
    <property type="development level" value="Tbio"/>
</dbReference>
<dbReference type="PRO" id="PR:Q8WUH1"/>
<dbReference type="Proteomes" id="UP000005640">
    <property type="component" value="Chromosome 14"/>
</dbReference>
<dbReference type="RNAct" id="Q8WUH1">
    <property type="molecule type" value="protein"/>
</dbReference>
<dbReference type="Bgee" id="ENSG00000258289">
    <property type="expression patterns" value="Expressed in calcaneal tendon and 187 other cell types or tissues"/>
</dbReference>
<dbReference type="ExpressionAtlas" id="Q8WUH1">
    <property type="expression patterns" value="baseline and differential"/>
</dbReference>
<dbReference type="GO" id="GO:0008270">
    <property type="term" value="F:zinc ion binding"/>
    <property type="evidence" value="ECO:0007669"/>
    <property type="project" value="InterPro"/>
</dbReference>
<dbReference type="GO" id="GO:0008543">
    <property type="term" value="P:fibroblast growth factor receptor signaling pathway"/>
    <property type="evidence" value="ECO:0000318"/>
    <property type="project" value="GO_Central"/>
</dbReference>
<dbReference type="GO" id="GO:0045893">
    <property type="term" value="P:positive regulation of DNA-templated transcription"/>
    <property type="evidence" value="ECO:0007669"/>
    <property type="project" value="InterPro"/>
</dbReference>
<dbReference type="FunFam" id="2.60.40.4240:FF:000001">
    <property type="entry name" value="Churchill domain containing 1"/>
    <property type="match status" value="1"/>
</dbReference>
<dbReference type="Gene3D" id="2.60.40.4240">
    <property type="entry name" value="Transcription activator, Churchill"/>
    <property type="match status" value="1"/>
</dbReference>
<dbReference type="InterPro" id="IPR038543">
    <property type="entry name" value="Churchill_sf"/>
</dbReference>
<dbReference type="InterPro" id="IPR009508">
    <property type="entry name" value="Transcrpt_activator_Churchill"/>
</dbReference>
<dbReference type="PANTHER" id="PTHR31931">
    <property type="entry name" value="PROTEIN CHURCHILL"/>
    <property type="match status" value="1"/>
</dbReference>
<dbReference type="PANTHER" id="PTHR31931:SF2">
    <property type="entry name" value="PROTEIN CHURCHILL"/>
    <property type="match status" value="1"/>
</dbReference>
<dbReference type="Pfam" id="PF06573">
    <property type="entry name" value="Churchill"/>
    <property type="match status" value="1"/>
</dbReference>
<comment type="function">
    <text evidence="1 2">Transcriptional activator that mediates FGF signaling during neural development (By similarity). Plays a role in the regulation of cell movement (By similarity).</text>
</comment>
<comment type="function">
    <molecule>Isoform 4</molecule>
    <text evidence="3">Does not bind DNA by itself.</text>
</comment>
<comment type="interaction">
    <interactant intactId="EBI-11156883">
        <id>Q8WUH1</id>
    </interactant>
    <interactant intactId="EBI-745520">
        <id>Q9P0T4</id>
        <label>ZNF581</label>
    </interactant>
    <organismsDiffer>false</organismsDiffer>
    <experiments>3</experiments>
</comment>
<comment type="alternative products">
    <event type="alternative splicing"/>
    <event type="alternative initiation"/>
    <isoform>
        <id>Q8WUH1-4</id>
        <name>4</name>
        <sequence type="displayed"/>
    </isoform>
    <isoform>
        <id>Q8WUH1-1</id>
        <name>1</name>
        <sequence type="described" ref="VSP_061409"/>
    </isoform>
    <isoform>
        <id>Q8WUH1-2</id>
        <name>2</name>
        <sequence type="described" ref="VSP_061411"/>
    </isoform>
    <isoform>
        <id>Q8WUH1-3</id>
        <name>3</name>
        <sequence type="described" ref="VSP_061410 VSP_061412"/>
    </isoform>
</comment>
<comment type="similarity">
    <text evidence="4">Belongs to the Churchill family.</text>
</comment>
<comment type="sequence caution" evidence="4">
    <conflict type="frameshift">
        <sequence resource="EMBL-CDS" id="AAG43128"/>
    </conflict>
</comment>
<protein>
    <recommendedName>
        <fullName>Protein Churchill</fullName>
    </recommendedName>
</protein>
<accession>Q8WUH1</accession>
<accession>A0A0C4DGJ7</accession>
<accession>B3KQ81</accession>
<accession>G3V1X3</accession>
<accession>G3V214</accession>
<accession>Q9H3K7</accession>
<keyword id="KW-0002">3D-structure</keyword>
<keyword id="KW-0010">Activator</keyword>
<keyword id="KW-0024">Alternative initiation</keyword>
<keyword id="KW-0025">Alternative splicing</keyword>
<keyword id="KW-0217">Developmental protein</keyword>
<keyword id="KW-0479">Metal-binding</keyword>
<keyword id="KW-1267">Proteomics identification</keyword>
<keyword id="KW-1185">Reference proteome</keyword>
<keyword id="KW-0804">Transcription</keyword>
<keyword id="KW-0805">Transcription regulation</keyword>
<keyword id="KW-0862">Zinc</keyword>
<organism>
    <name type="scientific">Homo sapiens</name>
    <name type="common">Human</name>
    <dbReference type="NCBI Taxonomy" id="9606"/>
    <lineage>
        <taxon>Eukaryota</taxon>
        <taxon>Metazoa</taxon>
        <taxon>Chordata</taxon>
        <taxon>Craniata</taxon>
        <taxon>Vertebrata</taxon>
        <taxon>Euteleostomi</taxon>
        <taxon>Mammalia</taxon>
        <taxon>Eutheria</taxon>
        <taxon>Euarchontoglires</taxon>
        <taxon>Primates</taxon>
        <taxon>Haplorrhini</taxon>
        <taxon>Catarrhini</taxon>
        <taxon>Hominidae</taxon>
        <taxon>Homo</taxon>
    </lineage>
</organism>
<proteinExistence type="evidence at protein level"/>
<reference key="1">
    <citation type="submission" date="1998-04" db="EMBL/GenBank/DDBJ databases">
        <authorList>
            <person name="Mao Y.M."/>
            <person name="Xie Y."/>
            <person name="Lin Q."/>
            <person name="Li Y."/>
            <person name="Dai J.L."/>
            <person name="Ying K."/>
        </authorList>
    </citation>
    <scope>NUCLEOTIDE SEQUENCE [LARGE SCALE MRNA] (ISOFORM 2)</scope>
    <source>
        <tissue>Fetal brain</tissue>
    </source>
</reference>
<reference key="2">
    <citation type="journal article" date="2004" name="Nat. Genet.">
        <title>Complete sequencing and characterization of 21,243 full-length human cDNAs.</title>
        <authorList>
            <person name="Ota T."/>
            <person name="Suzuki Y."/>
            <person name="Nishikawa T."/>
            <person name="Otsuki T."/>
            <person name="Sugiyama T."/>
            <person name="Irie R."/>
            <person name="Wakamatsu A."/>
            <person name="Hayashi K."/>
            <person name="Sato H."/>
            <person name="Nagai K."/>
            <person name="Kimura K."/>
            <person name="Makita H."/>
            <person name="Sekine M."/>
            <person name="Obayashi M."/>
            <person name="Nishi T."/>
            <person name="Shibahara T."/>
            <person name="Tanaka T."/>
            <person name="Ishii S."/>
            <person name="Yamamoto J."/>
            <person name="Saito K."/>
            <person name="Kawai Y."/>
            <person name="Isono Y."/>
            <person name="Nakamura Y."/>
            <person name="Nagahari K."/>
            <person name="Murakami K."/>
            <person name="Yasuda T."/>
            <person name="Iwayanagi T."/>
            <person name="Wagatsuma M."/>
            <person name="Shiratori A."/>
            <person name="Sudo H."/>
            <person name="Hosoiri T."/>
            <person name="Kaku Y."/>
            <person name="Kodaira H."/>
            <person name="Kondo H."/>
            <person name="Sugawara M."/>
            <person name="Takahashi M."/>
            <person name="Kanda K."/>
            <person name="Yokoi T."/>
            <person name="Furuya T."/>
            <person name="Kikkawa E."/>
            <person name="Omura Y."/>
            <person name="Abe K."/>
            <person name="Kamihara K."/>
            <person name="Katsuta N."/>
            <person name="Sato K."/>
            <person name="Tanikawa M."/>
            <person name="Yamazaki M."/>
            <person name="Ninomiya K."/>
            <person name="Ishibashi T."/>
            <person name="Yamashita H."/>
            <person name="Murakawa K."/>
            <person name="Fujimori K."/>
            <person name="Tanai H."/>
            <person name="Kimata M."/>
            <person name="Watanabe M."/>
            <person name="Hiraoka S."/>
            <person name="Chiba Y."/>
            <person name="Ishida S."/>
            <person name="Ono Y."/>
            <person name="Takiguchi S."/>
            <person name="Watanabe S."/>
            <person name="Yosida M."/>
            <person name="Hotuta T."/>
            <person name="Kusano J."/>
            <person name="Kanehori K."/>
            <person name="Takahashi-Fujii A."/>
            <person name="Hara H."/>
            <person name="Tanase T.-O."/>
            <person name="Nomura Y."/>
            <person name="Togiya S."/>
            <person name="Komai F."/>
            <person name="Hara R."/>
            <person name="Takeuchi K."/>
            <person name="Arita M."/>
            <person name="Imose N."/>
            <person name="Musashino K."/>
            <person name="Yuuki H."/>
            <person name="Oshima A."/>
            <person name="Sasaki N."/>
            <person name="Aotsuka S."/>
            <person name="Yoshikawa Y."/>
            <person name="Matsunawa H."/>
            <person name="Ichihara T."/>
            <person name="Shiohata N."/>
            <person name="Sano S."/>
            <person name="Moriya S."/>
            <person name="Momiyama H."/>
            <person name="Satoh N."/>
            <person name="Takami S."/>
            <person name="Terashima Y."/>
            <person name="Suzuki O."/>
            <person name="Nakagawa S."/>
            <person name="Senoh A."/>
            <person name="Mizoguchi H."/>
            <person name="Goto Y."/>
            <person name="Shimizu F."/>
            <person name="Wakebe H."/>
            <person name="Hishigaki H."/>
            <person name="Watanabe T."/>
            <person name="Sugiyama A."/>
            <person name="Takemoto M."/>
            <person name="Kawakami B."/>
            <person name="Yamazaki M."/>
            <person name="Watanabe K."/>
            <person name="Kumagai A."/>
            <person name="Itakura S."/>
            <person name="Fukuzumi Y."/>
            <person name="Fujimori Y."/>
            <person name="Komiyama M."/>
            <person name="Tashiro H."/>
            <person name="Tanigami A."/>
            <person name="Fujiwara T."/>
            <person name="Ono T."/>
            <person name="Yamada K."/>
            <person name="Fujii Y."/>
            <person name="Ozaki K."/>
            <person name="Hirao M."/>
            <person name="Ohmori Y."/>
            <person name="Kawabata A."/>
            <person name="Hikiji T."/>
            <person name="Kobatake N."/>
            <person name="Inagaki H."/>
            <person name="Ikema Y."/>
            <person name="Okamoto S."/>
            <person name="Okitani R."/>
            <person name="Kawakami T."/>
            <person name="Noguchi S."/>
            <person name="Itoh T."/>
            <person name="Shigeta K."/>
            <person name="Senba T."/>
            <person name="Matsumura K."/>
            <person name="Nakajima Y."/>
            <person name="Mizuno T."/>
            <person name="Morinaga M."/>
            <person name="Sasaki M."/>
            <person name="Togashi T."/>
            <person name="Oyama M."/>
            <person name="Hata H."/>
            <person name="Watanabe M."/>
            <person name="Komatsu T."/>
            <person name="Mizushima-Sugano J."/>
            <person name="Satoh T."/>
            <person name="Shirai Y."/>
            <person name="Takahashi Y."/>
            <person name="Nakagawa K."/>
            <person name="Okumura K."/>
            <person name="Nagase T."/>
            <person name="Nomura N."/>
            <person name="Kikuchi H."/>
            <person name="Masuho Y."/>
            <person name="Yamashita R."/>
            <person name="Nakai K."/>
            <person name="Yada T."/>
            <person name="Nakamura Y."/>
            <person name="Ohara O."/>
            <person name="Isogai T."/>
            <person name="Sugano S."/>
        </authorList>
    </citation>
    <scope>NUCLEOTIDE SEQUENCE [LARGE SCALE MRNA] (ISOFORM 1)</scope>
    <source>
        <tissue>Trachea</tissue>
    </source>
</reference>
<reference key="3">
    <citation type="journal article" date="2003" name="Nature">
        <title>The DNA sequence and analysis of human chromosome 14.</title>
        <authorList>
            <person name="Heilig R."/>
            <person name="Eckenberg R."/>
            <person name="Petit J.-L."/>
            <person name="Fonknechten N."/>
            <person name="Da Silva C."/>
            <person name="Cattolico L."/>
            <person name="Levy M."/>
            <person name="Barbe V."/>
            <person name="De Berardinis V."/>
            <person name="Ureta-Vidal A."/>
            <person name="Pelletier E."/>
            <person name="Vico V."/>
            <person name="Anthouard V."/>
            <person name="Rowen L."/>
            <person name="Madan A."/>
            <person name="Qin S."/>
            <person name="Sun H."/>
            <person name="Du H."/>
            <person name="Pepin K."/>
            <person name="Artiguenave F."/>
            <person name="Robert C."/>
            <person name="Cruaud C."/>
            <person name="Bruels T."/>
            <person name="Jaillon O."/>
            <person name="Friedlander L."/>
            <person name="Samson G."/>
            <person name="Brottier P."/>
            <person name="Cure S."/>
            <person name="Segurens B."/>
            <person name="Aniere F."/>
            <person name="Samain S."/>
            <person name="Crespeau H."/>
            <person name="Abbasi N."/>
            <person name="Aiach N."/>
            <person name="Boscus D."/>
            <person name="Dickhoff R."/>
            <person name="Dors M."/>
            <person name="Dubois I."/>
            <person name="Friedman C."/>
            <person name="Gouyvenoux M."/>
            <person name="James R."/>
            <person name="Madan A."/>
            <person name="Mairey-Estrada B."/>
            <person name="Mangenot S."/>
            <person name="Martins N."/>
            <person name="Menard M."/>
            <person name="Oztas S."/>
            <person name="Ratcliffe A."/>
            <person name="Shaffer T."/>
            <person name="Trask B."/>
            <person name="Vacherie B."/>
            <person name="Bellemere C."/>
            <person name="Belser C."/>
            <person name="Besnard-Gonnet M."/>
            <person name="Bartol-Mavel D."/>
            <person name="Boutard M."/>
            <person name="Briez-Silla S."/>
            <person name="Combette S."/>
            <person name="Dufosse-Laurent V."/>
            <person name="Ferron C."/>
            <person name="Lechaplais C."/>
            <person name="Louesse C."/>
            <person name="Muselet D."/>
            <person name="Magdelenat G."/>
            <person name="Pateau E."/>
            <person name="Petit E."/>
            <person name="Sirvain-Trukniewicz P."/>
            <person name="Trybou A."/>
            <person name="Vega-Czarny N."/>
            <person name="Bataille E."/>
            <person name="Bluet E."/>
            <person name="Bordelais I."/>
            <person name="Dubois M."/>
            <person name="Dumont C."/>
            <person name="Guerin T."/>
            <person name="Haffray S."/>
            <person name="Hammadi R."/>
            <person name="Muanga J."/>
            <person name="Pellouin V."/>
            <person name="Robert D."/>
            <person name="Wunderle E."/>
            <person name="Gauguet G."/>
            <person name="Roy A."/>
            <person name="Sainte-Marthe L."/>
            <person name="Verdier J."/>
            <person name="Verdier-Discala C."/>
            <person name="Hillier L.W."/>
            <person name="Fulton L."/>
            <person name="McPherson J."/>
            <person name="Matsuda F."/>
            <person name="Wilson R."/>
            <person name="Scarpelli C."/>
            <person name="Gyapay G."/>
            <person name="Wincker P."/>
            <person name="Saurin W."/>
            <person name="Quetier F."/>
            <person name="Waterston R."/>
            <person name="Hood L."/>
            <person name="Weissenbach J."/>
        </authorList>
    </citation>
    <scope>NUCLEOTIDE SEQUENCE [LARGE SCALE GENOMIC DNA]</scope>
</reference>
<reference key="4">
    <citation type="submission" date="2005-07" db="EMBL/GenBank/DDBJ databases">
        <authorList>
            <person name="Mural R.J."/>
            <person name="Istrail S."/>
            <person name="Sutton G.G."/>
            <person name="Florea L."/>
            <person name="Halpern A.L."/>
            <person name="Mobarry C.M."/>
            <person name="Lippert R."/>
            <person name="Walenz B."/>
            <person name="Shatkay H."/>
            <person name="Dew I."/>
            <person name="Miller J.R."/>
            <person name="Flanigan M.J."/>
            <person name="Edwards N.J."/>
            <person name="Bolanos R."/>
            <person name="Fasulo D."/>
            <person name="Halldorsson B.V."/>
            <person name="Hannenhalli S."/>
            <person name="Turner R."/>
            <person name="Yooseph S."/>
            <person name="Lu F."/>
            <person name="Nusskern D.R."/>
            <person name="Shue B.C."/>
            <person name="Zheng X.H."/>
            <person name="Zhong F."/>
            <person name="Delcher A.L."/>
            <person name="Huson D.H."/>
            <person name="Kravitz S.A."/>
            <person name="Mouchard L."/>
            <person name="Reinert K."/>
            <person name="Remington K.A."/>
            <person name="Clark A.G."/>
            <person name="Waterman M.S."/>
            <person name="Eichler E.E."/>
            <person name="Adams M.D."/>
            <person name="Hunkapiller M.W."/>
            <person name="Myers E.W."/>
            <person name="Venter J.C."/>
        </authorList>
    </citation>
    <scope>NUCLEOTIDE SEQUENCE [LARGE SCALE GENOMIC DNA]</scope>
</reference>
<reference key="5">
    <citation type="journal article" date="2004" name="Genome Res.">
        <title>The status, quality, and expansion of the NIH full-length cDNA project: the Mammalian Gene Collection (MGC).</title>
        <authorList>
            <consortium name="The MGC Project Team"/>
        </authorList>
    </citation>
    <scope>NUCLEOTIDE SEQUENCE [LARGE SCALE MRNA] (ISOFORM 1)</scope>
    <source>
        <tissue>Brain</tissue>
    </source>
</reference>
<reference key="6">
    <citation type="journal article" date="2007" name="J. Mol. Biol.">
        <title>Embryonic neural inducing factor Churchill is not a DNA-binding zinc finger protein: solution structure reveals a solvent-exposed beta-sheet and zinc binuclear cluster.</title>
        <authorList>
            <person name="Lee B.M."/>
            <person name="Buck-Koehntop B.A."/>
            <person name="Martinez-Yamout M.A."/>
            <person name="Dyson H.J."/>
            <person name="Wright P.E."/>
        </authorList>
    </citation>
    <scope>STRUCTURE BY NMR OF 2-109 IN COMPLEX WITH ZINC IONS</scope>
    <scope>FUNCTION (ISOFORM 4)</scope>
</reference>
<name>CHUR_HUMAN</name>
<evidence type="ECO:0000250" key="1">
    <source>
        <dbReference type="UniProtKB" id="Q5U3N7"/>
    </source>
</evidence>
<evidence type="ECO:0000250" key="2">
    <source>
        <dbReference type="UniProtKB" id="Q9DFZ3"/>
    </source>
</evidence>
<evidence type="ECO:0000269" key="3">
    <source>
    </source>
</evidence>
<evidence type="ECO:0000305" key="4"/>
<evidence type="ECO:0007829" key="5">
    <source>
        <dbReference type="PDB" id="2JOX"/>
    </source>
</evidence>
<gene>
    <name type="primary">CHURC1</name>
    <name type="synonym">C14orf52</name>
    <name type="synonym">CHCH</name>
    <name type="ORF">My015</name>
</gene>
<feature type="chain" id="PRO_0000089665" description="Protein Churchill">
    <location>
        <begin position="1"/>
        <end position="112"/>
    </location>
</feature>
<feature type="binding site">
    <location>
        <position position="2"/>
    </location>
    <ligand>
        <name>Zn(2+)</name>
        <dbReference type="ChEBI" id="CHEBI:29105"/>
        <label>1</label>
    </ligand>
</feature>
<feature type="binding site">
    <location>
        <position position="5"/>
    </location>
    <ligand>
        <name>Zn(2+)</name>
        <dbReference type="ChEBI" id="CHEBI:29105"/>
        <label>1</label>
    </ligand>
</feature>
<feature type="binding site">
    <location>
        <position position="30"/>
    </location>
    <ligand>
        <name>Zn(2+)</name>
        <dbReference type="ChEBI" id="CHEBI:29105"/>
        <label>1</label>
    </ligand>
</feature>
<feature type="binding site">
    <location>
        <position position="30"/>
    </location>
    <ligand>
        <name>Zn(2+)</name>
        <dbReference type="ChEBI" id="CHEBI:29105"/>
        <label>2</label>
    </ligand>
</feature>
<feature type="binding site">
    <location>
        <position position="33"/>
    </location>
    <ligand>
        <name>Zn(2+)</name>
        <dbReference type="ChEBI" id="CHEBI:29105"/>
        <label>2</label>
    </ligand>
</feature>
<feature type="binding site">
    <location>
        <position position="59"/>
    </location>
    <ligand>
        <name>Zn(2+)</name>
        <dbReference type="ChEBI" id="CHEBI:29105"/>
        <label>3</label>
    </ligand>
</feature>
<feature type="binding site">
    <location>
        <position position="61"/>
    </location>
    <ligand>
        <name>Zn(2+)</name>
        <dbReference type="ChEBI" id="CHEBI:29105"/>
        <label>2</label>
    </ligand>
</feature>
<feature type="binding site">
    <location>
        <position position="64"/>
    </location>
    <ligand>
        <name>Zn(2+)</name>
        <dbReference type="ChEBI" id="CHEBI:29105"/>
        <label>2</label>
    </ligand>
</feature>
<feature type="binding site">
    <location>
        <position position="66"/>
    </location>
    <ligand>
        <name>Zn(2+)</name>
        <dbReference type="ChEBI" id="CHEBI:29105"/>
        <label>1</label>
    </ligand>
</feature>
<feature type="binding site">
    <location>
        <position position="71"/>
    </location>
    <ligand>
        <name>Zn(2+)</name>
        <dbReference type="ChEBI" id="CHEBI:29105"/>
        <label>3</label>
    </ligand>
</feature>
<feature type="binding site">
    <location>
        <position position="88"/>
    </location>
    <ligand>
        <name>Zn(2+)</name>
        <dbReference type="ChEBI" id="CHEBI:29105"/>
        <label>3</label>
    </ligand>
</feature>
<feature type="binding site">
    <location>
        <position position="91"/>
    </location>
    <ligand>
        <name>Zn(2+)</name>
        <dbReference type="ChEBI" id="CHEBI:29105"/>
        <label>3</label>
    </ligand>
</feature>
<feature type="splice variant" id="VSP_061409" description="In isoform 1.">
    <original>M</original>
    <variation>MRQPYLSSREVSSSRKRWRTFPVDCVAM</variation>
    <location>
        <position position="1"/>
    </location>
</feature>
<feature type="splice variant" id="VSP_061410" description="In isoform 3.">
    <original>HLCKNCHHVIARHEYTFSIM</original>
    <variation>RVYHAVSVMRQSRRYYQYSP</variation>
    <location>
        <begin position="59"/>
        <end position="78"/>
    </location>
</feature>
<feature type="splice variant" id="VSP_061411" description="In isoform 2.">
    <original>H</original>
    <variation>PD</variation>
    <location>
        <position position="59"/>
    </location>
</feature>
<feature type="splice variant" id="VSP_061412" description="In isoform 3.">
    <location>
        <begin position="79"/>
        <end position="112"/>
    </location>
</feature>
<feature type="strand" evidence="5">
    <location>
        <begin position="6"/>
        <end position="10"/>
    </location>
</feature>
<feature type="turn" evidence="5">
    <location>
        <begin position="24"/>
        <end position="26"/>
    </location>
</feature>
<feature type="strand" evidence="5">
    <location>
        <begin position="31"/>
        <end position="33"/>
    </location>
</feature>
<feature type="strand" evidence="5">
    <location>
        <begin position="39"/>
        <end position="49"/>
    </location>
</feature>
<feature type="strand" evidence="5">
    <location>
        <begin position="52"/>
        <end position="61"/>
    </location>
</feature>
<feature type="turn" evidence="5">
    <location>
        <begin position="62"/>
        <end position="64"/>
    </location>
</feature>
<feature type="strand" evidence="5">
    <location>
        <begin position="67"/>
        <end position="78"/>
    </location>
</feature>
<feature type="strand" evidence="5">
    <location>
        <begin position="81"/>
        <end position="88"/>
    </location>
</feature>
<feature type="turn" evidence="5">
    <location>
        <begin position="89"/>
        <end position="91"/>
    </location>
</feature>
<feature type="strand" evidence="5">
    <location>
        <begin position="92"/>
        <end position="99"/>
    </location>
</feature>